<dbReference type="EC" id="2.1.2.11" evidence="1"/>
<dbReference type="EMBL" id="BA000003">
    <property type="protein sequence ID" value="BAB12914.1"/>
    <property type="molecule type" value="Genomic_DNA"/>
</dbReference>
<dbReference type="RefSeq" id="NP_240028.1">
    <property type="nucleotide sequence ID" value="NC_002528.1"/>
</dbReference>
<dbReference type="RefSeq" id="WP_010895995.1">
    <property type="nucleotide sequence ID" value="NC_002528.1"/>
</dbReference>
<dbReference type="SMR" id="P57293"/>
<dbReference type="STRING" id="563178.BUAP5A_194"/>
<dbReference type="EnsemblBacteria" id="BAB12914">
    <property type="protein sequence ID" value="BAB12914"/>
    <property type="gene ID" value="BAB12914"/>
</dbReference>
<dbReference type="KEGG" id="buc:BU197"/>
<dbReference type="PATRIC" id="fig|107806.10.peg.208"/>
<dbReference type="eggNOG" id="COG0413">
    <property type="taxonomic scope" value="Bacteria"/>
</dbReference>
<dbReference type="HOGENOM" id="CLU_036645_1_0_6"/>
<dbReference type="UniPathway" id="UPA00028">
    <property type="reaction ID" value="UER00003"/>
</dbReference>
<dbReference type="Proteomes" id="UP000001806">
    <property type="component" value="Chromosome"/>
</dbReference>
<dbReference type="GO" id="GO:0005737">
    <property type="term" value="C:cytoplasm"/>
    <property type="evidence" value="ECO:0007669"/>
    <property type="project" value="UniProtKB-SubCell"/>
</dbReference>
<dbReference type="GO" id="GO:0003864">
    <property type="term" value="F:3-methyl-2-oxobutanoate hydroxymethyltransferase activity"/>
    <property type="evidence" value="ECO:0007669"/>
    <property type="project" value="UniProtKB-UniRule"/>
</dbReference>
<dbReference type="GO" id="GO:0000287">
    <property type="term" value="F:magnesium ion binding"/>
    <property type="evidence" value="ECO:0007669"/>
    <property type="project" value="TreeGrafter"/>
</dbReference>
<dbReference type="GO" id="GO:0015940">
    <property type="term" value="P:pantothenate biosynthetic process"/>
    <property type="evidence" value="ECO:0007669"/>
    <property type="project" value="UniProtKB-UniRule"/>
</dbReference>
<dbReference type="CDD" id="cd06557">
    <property type="entry name" value="KPHMT-like"/>
    <property type="match status" value="1"/>
</dbReference>
<dbReference type="FunFam" id="3.20.20.60:FF:000003">
    <property type="entry name" value="3-methyl-2-oxobutanoate hydroxymethyltransferase"/>
    <property type="match status" value="1"/>
</dbReference>
<dbReference type="Gene3D" id="3.20.20.60">
    <property type="entry name" value="Phosphoenolpyruvate-binding domains"/>
    <property type="match status" value="1"/>
</dbReference>
<dbReference type="HAMAP" id="MF_00156">
    <property type="entry name" value="PanB"/>
    <property type="match status" value="1"/>
</dbReference>
<dbReference type="InterPro" id="IPR003700">
    <property type="entry name" value="Pantoate_hydroxy_MeTrfase"/>
</dbReference>
<dbReference type="InterPro" id="IPR015813">
    <property type="entry name" value="Pyrv/PenolPyrv_kinase-like_dom"/>
</dbReference>
<dbReference type="InterPro" id="IPR040442">
    <property type="entry name" value="Pyrv_kinase-like_dom_sf"/>
</dbReference>
<dbReference type="NCBIfam" id="TIGR00222">
    <property type="entry name" value="panB"/>
    <property type="match status" value="1"/>
</dbReference>
<dbReference type="NCBIfam" id="NF001452">
    <property type="entry name" value="PRK00311.1"/>
    <property type="match status" value="1"/>
</dbReference>
<dbReference type="PANTHER" id="PTHR20881">
    <property type="entry name" value="3-METHYL-2-OXOBUTANOATE HYDROXYMETHYLTRANSFERASE"/>
    <property type="match status" value="1"/>
</dbReference>
<dbReference type="PANTHER" id="PTHR20881:SF0">
    <property type="entry name" value="3-METHYL-2-OXOBUTANOATE HYDROXYMETHYLTRANSFERASE"/>
    <property type="match status" value="1"/>
</dbReference>
<dbReference type="Pfam" id="PF02548">
    <property type="entry name" value="Pantoate_transf"/>
    <property type="match status" value="1"/>
</dbReference>
<dbReference type="PIRSF" id="PIRSF000388">
    <property type="entry name" value="Pantoate_hydroxy_MeTrfase"/>
    <property type="match status" value="1"/>
</dbReference>
<dbReference type="SUPFAM" id="SSF51621">
    <property type="entry name" value="Phosphoenolpyruvate/pyruvate domain"/>
    <property type="match status" value="1"/>
</dbReference>
<gene>
    <name evidence="1" type="primary">panB</name>
    <name type="ordered locus">BU197</name>
</gene>
<accession>P57293</accession>
<sequence length="263" mass="29353">MESITISQLKNWKINKKKFAAITAYDFSFSRLFSNCGIPVILIGDSLGMTIQGHTSTLPVKIEDIAYHTKAVRKGAPNTFLISDLPFMSYYDTKQALKNTAKIIRSGANMIKMEGGKWLIEIIRELSNRLILICGHIGLIPQSFHYLGGYKVQGRKENDANKLIDEALLLEESGINMLILECIPEKLAKKITESLSIPVIGIGSGKNTDGQILVMHDLLGITEGKTPSFTKNFLSESDSIQKAIQKYIYEVEHSIYPSKKHSF</sequence>
<keyword id="KW-0963">Cytoplasm</keyword>
<keyword id="KW-0460">Magnesium</keyword>
<keyword id="KW-0479">Metal-binding</keyword>
<keyword id="KW-0566">Pantothenate biosynthesis</keyword>
<keyword id="KW-1185">Reference proteome</keyword>
<keyword id="KW-0808">Transferase</keyword>
<proteinExistence type="inferred from homology"/>
<feature type="chain" id="PRO_0000184828" description="3-methyl-2-oxobutanoate hydroxymethyltransferase">
    <location>
        <begin position="1"/>
        <end position="263"/>
    </location>
</feature>
<feature type="active site" description="Proton acceptor" evidence="1">
    <location>
        <position position="181"/>
    </location>
</feature>
<feature type="binding site" evidence="1">
    <location>
        <begin position="45"/>
        <end position="46"/>
    </location>
    <ligand>
        <name>3-methyl-2-oxobutanoate</name>
        <dbReference type="ChEBI" id="CHEBI:11851"/>
    </ligand>
</feature>
<feature type="binding site" evidence="1">
    <location>
        <position position="45"/>
    </location>
    <ligand>
        <name>Mg(2+)</name>
        <dbReference type="ChEBI" id="CHEBI:18420"/>
    </ligand>
</feature>
<feature type="binding site" evidence="1">
    <location>
        <position position="84"/>
    </location>
    <ligand>
        <name>3-methyl-2-oxobutanoate</name>
        <dbReference type="ChEBI" id="CHEBI:11851"/>
    </ligand>
</feature>
<feature type="binding site" evidence="1">
    <location>
        <position position="84"/>
    </location>
    <ligand>
        <name>Mg(2+)</name>
        <dbReference type="ChEBI" id="CHEBI:18420"/>
    </ligand>
</feature>
<feature type="binding site" evidence="1">
    <location>
        <position position="112"/>
    </location>
    <ligand>
        <name>3-methyl-2-oxobutanoate</name>
        <dbReference type="ChEBI" id="CHEBI:11851"/>
    </ligand>
</feature>
<feature type="binding site" evidence="1">
    <location>
        <position position="114"/>
    </location>
    <ligand>
        <name>Mg(2+)</name>
        <dbReference type="ChEBI" id="CHEBI:18420"/>
    </ligand>
</feature>
<organism>
    <name type="scientific">Buchnera aphidicola subsp. Acyrthosiphon pisum (strain APS)</name>
    <name type="common">Acyrthosiphon pisum symbiotic bacterium</name>
    <dbReference type="NCBI Taxonomy" id="107806"/>
    <lineage>
        <taxon>Bacteria</taxon>
        <taxon>Pseudomonadati</taxon>
        <taxon>Pseudomonadota</taxon>
        <taxon>Gammaproteobacteria</taxon>
        <taxon>Enterobacterales</taxon>
        <taxon>Erwiniaceae</taxon>
        <taxon>Buchnera</taxon>
    </lineage>
</organism>
<protein>
    <recommendedName>
        <fullName evidence="1">3-methyl-2-oxobutanoate hydroxymethyltransferase</fullName>
        <ecNumber evidence="1">2.1.2.11</ecNumber>
    </recommendedName>
    <alternativeName>
        <fullName evidence="1">Ketopantoate hydroxymethyltransferase</fullName>
        <shortName evidence="1">KPHMT</shortName>
    </alternativeName>
</protein>
<reference key="1">
    <citation type="journal article" date="2000" name="Nature">
        <title>Genome sequence of the endocellular bacterial symbiont of aphids Buchnera sp. APS.</title>
        <authorList>
            <person name="Shigenobu S."/>
            <person name="Watanabe H."/>
            <person name="Hattori M."/>
            <person name="Sakaki Y."/>
            <person name="Ishikawa H."/>
        </authorList>
    </citation>
    <scope>NUCLEOTIDE SEQUENCE [LARGE SCALE GENOMIC DNA]</scope>
    <source>
        <strain>APS</strain>
    </source>
</reference>
<name>PANB_BUCAI</name>
<evidence type="ECO:0000255" key="1">
    <source>
        <dbReference type="HAMAP-Rule" id="MF_00156"/>
    </source>
</evidence>
<comment type="function">
    <text evidence="1">Catalyzes the reversible reaction in which hydroxymethyl group from 5,10-methylenetetrahydrofolate is transferred onto alpha-ketoisovalerate to form ketopantoate.</text>
</comment>
<comment type="catalytic activity">
    <reaction evidence="1">
        <text>3-methyl-2-oxobutanoate + (6R)-5,10-methylene-5,6,7,8-tetrahydrofolate + H2O = 2-dehydropantoate + (6S)-5,6,7,8-tetrahydrofolate</text>
        <dbReference type="Rhea" id="RHEA:11824"/>
        <dbReference type="ChEBI" id="CHEBI:11561"/>
        <dbReference type="ChEBI" id="CHEBI:11851"/>
        <dbReference type="ChEBI" id="CHEBI:15377"/>
        <dbReference type="ChEBI" id="CHEBI:15636"/>
        <dbReference type="ChEBI" id="CHEBI:57453"/>
        <dbReference type="EC" id="2.1.2.11"/>
    </reaction>
</comment>
<comment type="cofactor">
    <cofactor evidence="1">
        <name>Mg(2+)</name>
        <dbReference type="ChEBI" id="CHEBI:18420"/>
    </cofactor>
    <text evidence="1">Binds 1 Mg(2+) ion per subunit.</text>
</comment>
<comment type="pathway">
    <text evidence="1">Cofactor biosynthesis; (R)-pantothenate biosynthesis; (R)-pantoate from 3-methyl-2-oxobutanoate: step 1/2.</text>
</comment>
<comment type="subunit">
    <text evidence="1">Homodecamer; pentamer of dimers.</text>
</comment>
<comment type="subcellular location">
    <subcellularLocation>
        <location evidence="1">Cytoplasm</location>
    </subcellularLocation>
</comment>
<comment type="similarity">
    <text evidence="1">Belongs to the PanB family.</text>
</comment>